<keyword id="KW-0028">Amino-acid biosynthesis</keyword>
<keyword id="KW-0057">Aromatic amino acid biosynthesis</keyword>
<keyword id="KW-0456">Lyase</keyword>
<keyword id="KW-1185">Reference proteome</keyword>
<sequence length="159" mass="17595">MKIMIIQGPNVNMLGVREVGIYGAMKMEEIHEQMKLAASQNNVELDFFQSNFEGEIVDKIQECLGTVDGIIINAAGYTHTSVAIRDAIAAVALPTIEVHISNVYRREEFRQKSLIAPVCSGTIVGFGPFGYHLALMGIIQICEQIKNLRAMQQAQQTNK</sequence>
<gene>
    <name evidence="1" type="primary">aroQ</name>
    <name type="ordered locus">Cj0066c</name>
</gene>
<name>AROQ_CAMJE</name>
<comment type="function">
    <text evidence="1">Catalyzes a trans-dehydration via an enolate intermediate.</text>
</comment>
<comment type="catalytic activity">
    <reaction evidence="1">
        <text>3-dehydroquinate = 3-dehydroshikimate + H2O</text>
        <dbReference type="Rhea" id="RHEA:21096"/>
        <dbReference type="ChEBI" id="CHEBI:15377"/>
        <dbReference type="ChEBI" id="CHEBI:16630"/>
        <dbReference type="ChEBI" id="CHEBI:32364"/>
        <dbReference type="EC" id="4.2.1.10"/>
    </reaction>
</comment>
<comment type="pathway">
    <text evidence="1">Metabolic intermediate biosynthesis; chorismate biosynthesis; chorismate from D-erythrose 4-phosphate and phosphoenolpyruvate: step 3/7.</text>
</comment>
<comment type="subunit">
    <text evidence="1">Homododecamer.</text>
</comment>
<comment type="similarity">
    <text evidence="1">Belongs to the type-II 3-dehydroquinase family.</text>
</comment>
<organism>
    <name type="scientific">Campylobacter jejuni subsp. jejuni serotype O:2 (strain ATCC 700819 / NCTC 11168)</name>
    <dbReference type="NCBI Taxonomy" id="192222"/>
    <lineage>
        <taxon>Bacteria</taxon>
        <taxon>Pseudomonadati</taxon>
        <taxon>Campylobacterota</taxon>
        <taxon>Epsilonproteobacteria</taxon>
        <taxon>Campylobacterales</taxon>
        <taxon>Campylobacteraceae</taxon>
        <taxon>Campylobacter</taxon>
    </lineage>
</organism>
<proteinExistence type="inferred from homology"/>
<evidence type="ECO:0000255" key="1">
    <source>
        <dbReference type="HAMAP-Rule" id="MF_00169"/>
    </source>
</evidence>
<reference key="1">
    <citation type="journal article" date="2000" name="Nature">
        <title>The genome sequence of the food-borne pathogen Campylobacter jejuni reveals hypervariable sequences.</title>
        <authorList>
            <person name="Parkhill J."/>
            <person name="Wren B.W."/>
            <person name="Mungall K.L."/>
            <person name="Ketley J.M."/>
            <person name="Churcher C.M."/>
            <person name="Basham D."/>
            <person name="Chillingworth T."/>
            <person name="Davies R.M."/>
            <person name="Feltwell T."/>
            <person name="Holroyd S."/>
            <person name="Jagels K."/>
            <person name="Karlyshev A.V."/>
            <person name="Moule S."/>
            <person name="Pallen M.J."/>
            <person name="Penn C.W."/>
            <person name="Quail M.A."/>
            <person name="Rajandream M.A."/>
            <person name="Rutherford K.M."/>
            <person name="van Vliet A.H.M."/>
            <person name="Whitehead S."/>
            <person name="Barrell B.G."/>
        </authorList>
    </citation>
    <scope>NUCLEOTIDE SEQUENCE [LARGE SCALE GENOMIC DNA]</scope>
    <source>
        <strain>ATCC 700819 / NCTC 11168</strain>
    </source>
</reference>
<protein>
    <recommendedName>
        <fullName evidence="1">3-dehydroquinate dehydratase</fullName>
        <shortName evidence="1">3-dehydroquinase</shortName>
        <ecNumber evidence="1">4.2.1.10</ecNumber>
    </recommendedName>
    <alternativeName>
        <fullName evidence="1">Type II DHQase</fullName>
    </alternativeName>
</protein>
<feature type="chain" id="PRO_0000159886" description="3-dehydroquinate dehydratase">
    <location>
        <begin position="1"/>
        <end position="159"/>
    </location>
</feature>
<feature type="active site" description="Proton acceptor" evidence="1">
    <location>
        <position position="22"/>
    </location>
</feature>
<feature type="active site" description="Proton donor" evidence="1">
    <location>
        <position position="99"/>
    </location>
</feature>
<feature type="binding site" evidence="1">
    <location>
        <position position="73"/>
    </location>
    <ligand>
        <name>substrate</name>
    </ligand>
</feature>
<feature type="binding site" evidence="1">
    <location>
        <position position="79"/>
    </location>
    <ligand>
        <name>substrate</name>
    </ligand>
</feature>
<feature type="binding site" evidence="1">
    <location>
        <position position="86"/>
    </location>
    <ligand>
        <name>substrate</name>
    </ligand>
</feature>
<feature type="binding site" evidence="1">
    <location>
        <begin position="100"/>
        <end position="101"/>
    </location>
    <ligand>
        <name>substrate</name>
    </ligand>
</feature>
<feature type="binding site" evidence="1">
    <location>
        <position position="110"/>
    </location>
    <ligand>
        <name>substrate</name>
    </ligand>
</feature>
<feature type="site" description="Transition state stabilizer" evidence="1">
    <location>
        <position position="17"/>
    </location>
</feature>
<accession>Q9PJ53</accession>
<accession>Q0PC67</accession>
<dbReference type="EC" id="4.2.1.10" evidence="1"/>
<dbReference type="EMBL" id="AL111168">
    <property type="protein sequence ID" value="CAL34240.1"/>
    <property type="molecule type" value="Genomic_DNA"/>
</dbReference>
<dbReference type="PIR" id="F81422">
    <property type="entry name" value="F81422"/>
</dbReference>
<dbReference type="RefSeq" id="WP_002852001.1">
    <property type="nucleotide sequence ID" value="NZ_SZUC01000005.1"/>
</dbReference>
<dbReference type="RefSeq" id="YP_002343530.1">
    <property type="nucleotide sequence ID" value="NC_002163.1"/>
</dbReference>
<dbReference type="SMR" id="Q9PJ53"/>
<dbReference type="IntAct" id="Q9PJ53">
    <property type="interactions" value="13"/>
</dbReference>
<dbReference type="STRING" id="192222.Cj0066c"/>
<dbReference type="PaxDb" id="192222-Cj0066c"/>
<dbReference type="EnsemblBacteria" id="CAL34240">
    <property type="protein sequence ID" value="CAL34240"/>
    <property type="gene ID" value="Cj0066c"/>
</dbReference>
<dbReference type="GeneID" id="904397"/>
<dbReference type="KEGG" id="cje:Cj0066c"/>
<dbReference type="PATRIC" id="fig|192222.6.peg.65"/>
<dbReference type="eggNOG" id="COG0757">
    <property type="taxonomic scope" value="Bacteria"/>
</dbReference>
<dbReference type="HOGENOM" id="CLU_090968_2_0_7"/>
<dbReference type="OrthoDB" id="9790793at2"/>
<dbReference type="UniPathway" id="UPA00053">
    <property type="reaction ID" value="UER00086"/>
</dbReference>
<dbReference type="Proteomes" id="UP000000799">
    <property type="component" value="Chromosome"/>
</dbReference>
<dbReference type="GO" id="GO:0003855">
    <property type="term" value="F:3-dehydroquinate dehydratase activity"/>
    <property type="evidence" value="ECO:0007669"/>
    <property type="project" value="UniProtKB-UniRule"/>
</dbReference>
<dbReference type="GO" id="GO:0008652">
    <property type="term" value="P:amino acid biosynthetic process"/>
    <property type="evidence" value="ECO:0007669"/>
    <property type="project" value="UniProtKB-KW"/>
</dbReference>
<dbReference type="GO" id="GO:0009073">
    <property type="term" value="P:aromatic amino acid family biosynthetic process"/>
    <property type="evidence" value="ECO:0007669"/>
    <property type="project" value="UniProtKB-KW"/>
</dbReference>
<dbReference type="GO" id="GO:0009423">
    <property type="term" value="P:chorismate biosynthetic process"/>
    <property type="evidence" value="ECO:0007669"/>
    <property type="project" value="UniProtKB-UniRule"/>
</dbReference>
<dbReference type="GO" id="GO:0019631">
    <property type="term" value="P:quinate catabolic process"/>
    <property type="evidence" value="ECO:0007669"/>
    <property type="project" value="TreeGrafter"/>
</dbReference>
<dbReference type="CDD" id="cd00466">
    <property type="entry name" value="DHQase_II"/>
    <property type="match status" value="1"/>
</dbReference>
<dbReference type="Gene3D" id="3.40.50.9100">
    <property type="entry name" value="Dehydroquinase, class II"/>
    <property type="match status" value="1"/>
</dbReference>
<dbReference type="HAMAP" id="MF_00169">
    <property type="entry name" value="AroQ"/>
    <property type="match status" value="1"/>
</dbReference>
<dbReference type="InterPro" id="IPR001874">
    <property type="entry name" value="DHquinase_II"/>
</dbReference>
<dbReference type="InterPro" id="IPR018509">
    <property type="entry name" value="DHquinase_II_CS"/>
</dbReference>
<dbReference type="InterPro" id="IPR036441">
    <property type="entry name" value="DHquinase_II_sf"/>
</dbReference>
<dbReference type="NCBIfam" id="TIGR01088">
    <property type="entry name" value="aroQ"/>
    <property type="match status" value="1"/>
</dbReference>
<dbReference type="NCBIfam" id="NF003805">
    <property type="entry name" value="PRK05395.1-2"/>
    <property type="match status" value="1"/>
</dbReference>
<dbReference type="NCBIfam" id="NF003806">
    <property type="entry name" value="PRK05395.1-3"/>
    <property type="match status" value="1"/>
</dbReference>
<dbReference type="NCBIfam" id="NF003807">
    <property type="entry name" value="PRK05395.1-4"/>
    <property type="match status" value="1"/>
</dbReference>
<dbReference type="PANTHER" id="PTHR21272">
    <property type="entry name" value="CATABOLIC 3-DEHYDROQUINASE"/>
    <property type="match status" value="1"/>
</dbReference>
<dbReference type="PANTHER" id="PTHR21272:SF3">
    <property type="entry name" value="CATABOLIC 3-DEHYDROQUINASE"/>
    <property type="match status" value="1"/>
</dbReference>
<dbReference type="Pfam" id="PF01220">
    <property type="entry name" value="DHquinase_II"/>
    <property type="match status" value="1"/>
</dbReference>
<dbReference type="PIRSF" id="PIRSF001399">
    <property type="entry name" value="DHquinase_II"/>
    <property type="match status" value="1"/>
</dbReference>
<dbReference type="SUPFAM" id="SSF52304">
    <property type="entry name" value="Type II 3-dehydroquinate dehydratase"/>
    <property type="match status" value="1"/>
</dbReference>
<dbReference type="PROSITE" id="PS01029">
    <property type="entry name" value="DEHYDROQUINASE_II"/>
    <property type="match status" value="1"/>
</dbReference>